<gene>
    <name evidence="1" type="primary">glsA</name>
    <name type="ordered locus">CLJ_B3035</name>
</gene>
<protein>
    <recommendedName>
        <fullName evidence="1">Glutaminase</fullName>
        <ecNumber evidence="1">3.5.1.2</ecNumber>
    </recommendedName>
</protein>
<accession>C3L2L2</accession>
<name>GLSA_CLOB6</name>
<reference key="1">
    <citation type="submission" date="2008-05" db="EMBL/GenBank/DDBJ databases">
        <title>Genome sequence of Clostridium botulinum Ba4 strain 657.</title>
        <authorList>
            <person name="Shrivastava S."/>
            <person name="Brown J.L."/>
            <person name="Bruce D."/>
            <person name="Detter C."/>
            <person name="Munk C."/>
            <person name="Smith L.A."/>
            <person name="Smith T.J."/>
            <person name="Sutton G."/>
            <person name="Brettin T.S."/>
        </authorList>
    </citation>
    <scope>NUCLEOTIDE SEQUENCE [LARGE SCALE GENOMIC DNA]</scope>
    <source>
        <strain>657 / Type Ba4</strain>
    </source>
</reference>
<proteinExistence type="inferred from homology"/>
<keyword id="KW-0378">Hydrolase</keyword>
<comment type="catalytic activity">
    <reaction evidence="1">
        <text>L-glutamine + H2O = L-glutamate + NH4(+)</text>
        <dbReference type="Rhea" id="RHEA:15889"/>
        <dbReference type="ChEBI" id="CHEBI:15377"/>
        <dbReference type="ChEBI" id="CHEBI:28938"/>
        <dbReference type="ChEBI" id="CHEBI:29985"/>
        <dbReference type="ChEBI" id="CHEBI:58359"/>
        <dbReference type="EC" id="3.5.1.2"/>
    </reaction>
</comment>
<comment type="subunit">
    <text evidence="1">Homotetramer.</text>
</comment>
<comment type="similarity">
    <text evidence="1">Belongs to the glutaminase family.</text>
</comment>
<feature type="chain" id="PRO_1000205061" description="Glutaminase">
    <location>
        <begin position="1"/>
        <end position="305"/>
    </location>
</feature>
<feature type="binding site" evidence="1">
    <location>
        <position position="61"/>
    </location>
    <ligand>
        <name>substrate</name>
    </ligand>
</feature>
<feature type="binding site" evidence="1">
    <location>
        <position position="113"/>
    </location>
    <ligand>
        <name>substrate</name>
    </ligand>
</feature>
<feature type="binding site" evidence="1">
    <location>
        <position position="158"/>
    </location>
    <ligand>
        <name>substrate</name>
    </ligand>
</feature>
<feature type="binding site" evidence="1">
    <location>
        <position position="165"/>
    </location>
    <ligand>
        <name>substrate</name>
    </ligand>
</feature>
<feature type="binding site" evidence="1">
    <location>
        <position position="189"/>
    </location>
    <ligand>
        <name>substrate</name>
    </ligand>
</feature>
<feature type="binding site" evidence="1">
    <location>
        <position position="241"/>
    </location>
    <ligand>
        <name>substrate</name>
    </ligand>
</feature>
<feature type="binding site" evidence="1">
    <location>
        <position position="259"/>
    </location>
    <ligand>
        <name>substrate</name>
    </ligand>
</feature>
<organism>
    <name type="scientific">Clostridium botulinum (strain 657 / Type Ba4)</name>
    <dbReference type="NCBI Taxonomy" id="515621"/>
    <lineage>
        <taxon>Bacteria</taxon>
        <taxon>Bacillati</taxon>
        <taxon>Bacillota</taxon>
        <taxon>Clostridia</taxon>
        <taxon>Eubacteriales</taxon>
        <taxon>Clostridiaceae</taxon>
        <taxon>Clostridium</taxon>
    </lineage>
</organism>
<dbReference type="EC" id="3.5.1.2" evidence="1"/>
<dbReference type="EMBL" id="CP001083">
    <property type="protein sequence ID" value="ACQ54791.1"/>
    <property type="molecule type" value="Genomic_DNA"/>
</dbReference>
<dbReference type="RefSeq" id="WP_012721317.1">
    <property type="nucleotide sequence ID" value="NC_012658.1"/>
</dbReference>
<dbReference type="SMR" id="C3L2L2"/>
<dbReference type="KEGG" id="cbi:CLJ_B3035"/>
<dbReference type="HOGENOM" id="CLU_027932_1_0_9"/>
<dbReference type="Proteomes" id="UP000002333">
    <property type="component" value="Chromosome"/>
</dbReference>
<dbReference type="GO" id="GO:0004359">
    <property type="term" value="F:glutaminase activity"/>
    <property type="evidence" value="ECO:0007669"/>
    <property type="project" value="UniProtKB-UniRule"/>
</dbReference>
<dbReference type="GO" id="GO:0006537">
    <property type="term" value="P:glutamate biosynthetic process"/>
    <property type="evidence" value="ECO:0007669"/>
    <property type="project" value="TreeGrafter"/>
</dbReference>
<dbReference type="GO" id="GO:0006543">
    <property type="term" value="P:glutamine catabolic process"/>
    <property type="evidence" value="ECO:0007669"/>
    <property type="project" value="TreeGrafter"/>
</dbReference>
<dbReference type="FunFam" id="3.40.710.10:FF:000005">
    <property type="entry name" value="Glutaminase"/>
    <property type="match status" value="1"/>
</dbReference>
<dbReference type="Gene3D" id="3.40.710.10">
    <property type="entry name" value="DD-peptidase/beta-lactamase superfamily"/>
    <property type="match status" value="1"/>
</dbReference>
<dbReference type="HAMAP" id="MF_00313">
    <property type="entry name" value="Glutaminase"/>
    <property type="match status" value="1"/>
</dbReference>
<dbReference type="InterPro" id="IPR012338">
    <property type="entry name" value="Beta-lactam/transpept-like"/>
</dbReference>
<dbReference type="InterPro" id="IPR015868">
    <property type="entry name" value="Glutaminase"/>
</dbReference>
<dbReference type="NCBIfam" id="TIGR03814">
    <property type="entry name" value="Gln_ase"/>
    <property type="match status" value="1"/>
</dbReference>
<dbReference type="PANTHER" id="PTHR12544">
    <property type="entry name" value="GLUTAMINASE"/>
    <property type="match status" value="1"/>
</dbReference>
<dbReference type="PANTHER" id="PTHR12544:SF29">
    <property type="entry name" value="GLUTAMINASE"/>
    <property type="match status" value="1"/>
</dbReference>
<dbReference type="Pfam" id="PF04960">
    <property type="entry name" value="Glutaminase"/>
    <property type="match status" value="1"/>
</dbReference>
<dbReference type="SUPFAM" id="SSF56601">
    <property type="entry name" value="beta-lactamase/transpeptidase-like"/>
    <property type="match status" value="1"/>
</dbReference>
<sequence>MNRLFKTIIENNRKWVSEGKVASYIPELSKMDKNLLGISVCTLGGEEYWEGDAEVKFTIQSISKIVTLMLAIIDNGEDYVFSKVGMEPTETAFNSIVNLEAKESHKPINPMINAGAIVVASMVAGKDSDEKFDRILKFTRKISGNNNIDINLNVYKSEKETGHRNRALAYFMKSTGALKGNVEEILDVYFKQCSIEITCKDLARIGVMLANDGVSPYTGDRIVPRHVARIVKTIMVTCGMYDASGNFAVHIGIPAKSGVGGGIVACAPRRMGIGVLGTALDEKGNSIAGTKILEELSKQLDLSIF</sequence>
<evidence type="ECO:0000255" key="1">
    <source>
        <dbReference type="HAMAP-Rule" id="MF_00313"/>
    </source>
</evidence>